<evidence type="ECO:0000255" key="1"/>
<evidence type="ECO:0000256" key="2">
    <source>
        <dbReference type="SAM" id="MobiDB-lite"/>
    </source>
</evidence>
<evidence type="ECO:0000269" key="3">
    <source>
    </source>
</evidence>
<evidence type="ECO:0000269" key="4">
    <source>
    </source>
</evidence>
<evidence type="ECO:0000269" key="5">
    <source>
    </source>
</evidence>
<evidence type="ECO:0000269" key="6">
    <source>
    </source>
</evidence>
<evidence type="ECO:0000269" key="7">
    <source>
    </source>
</evidence>
<evidence type="ECO:0000269" key="8">
    <source>
    </source>
</evidence>
<evidence type="ECO:0000305" key="9"/>
<evidence type="ECO:0007744" key="10">
    <source>
    </source>
</evidence>
<evidence type="ECO:0007744" key="11">
    <source>
    </source>
</evidence>
<evidence type="ECO:0007744" key="12">
    <source>
    </source>
</evidence>
<organism>
    <name type="scientific">Saccharomyces cerevisiae (strain ATCC 204508 / S288c)</name>
    <name type="common">Baker's yeast</name>
    <dbReference type="NCBI Taxonomy" id="559292"/>
    <lineage>
        <taxon>Eukaryota</taxon>
        <taxon>Fungi</taxon>
        <taxon>Dikarya</taxon>
        <taxon>Ascomycota</taxon>
        <taxon>Saccharomycotina</taxon>
        <taxon>Saccharomycetes</taxon>
        <taxon>Saccharomycetales</taxon>
        <taxon>Saccharomycetaceae</taxon>
        <taxon>Saccharomyces</taxon>
    </lineage>
</organism>
<name>TPO4_YEAST</name>
<dbReference type="EMBL" id="X89633">
    <property type="protein sequence ID" value="CAA61779.1"/>
    <property type="molecule type" value="Genomic_DNA"/>
</dbReference>
<dbReference type="EMBL" id="Z75181">
    <property type="protein sequence ID" value="CAA99498.1"/>
    <property type="molecule type" value="Genomic_DNA"/>
</dbReference>
<dbReference type="EMBL" id="BK006948">
    <property type="protein sequence ID" value="DAA11039.1"/>
    <property type="molecule type" value="Genomic_DNA"/>
</dbReference>
<dbReference type="PIR" id="S67175">
    <property type="entry name" value="S67175"/>
</dbReference>
<dbReference type="RefSeq" id="NP_014916.1">
    <property type="nucleotide sequence ID" value="NM_001183692.1"/>
</dbReference>
<dbReference type="BioGRID" id="34662">
    <property type="interactions" value="76"/>
</dbReference>
<dbReference type="DIP" id="DIP-4096N"/>
<dbReference type="FunCoup" id="Q12256">
    <property type="interactions" value="103"/>
</dbReference>
<dbReference type="IntAct" id="Q12256">
    <property type="interactions" value="24"/>
</dbReference>
<dbReference type="MINT" id="Q12256"/>
<dbReference type="STRING" id="4932.YOR273C"/>
<dbReference type="TCDB" id="2.A.1.2.64">
    <property type="family name" value="the major facilitator superfamily (mfs)"/>
</dbReference>
<dbReference type="iPTMnet" id="Q12256"/>
<dbReference type="PaxDb" id="4932-YOR273C"/>
<dbReference type="PeptideAtlas" id="Q12256"/>
<dbReference type="EnsemblFungi" id="YOR273C_mRNA">
    <property type="protein sequence ID" value="YOR273C"/>
    <property type="gene ID" value="YOR273C"/>
</dbReference>
<dbReference type="GeneID" id="854447"/>
<dbReference type="KEGG" id="sce:YOR273C"/>
<dbReference type="AGR" id="SGD:S000005799"/>
<dbReference type="SGD" id="S000005799">
    <property type="gene designation" value="TPO4"/>
</dbReference>
<dbReference type="VEuPathDB" id="FungiDB:YOR273C"/>
<dbReference type="eggNOG" id="KOG0255">
    <property type="taxonomic scope" value="Eukaryota"/>
</dbReference>
<dbReference type="HOGENOM" id="CLU_008455_11_3_1"/>
<dbReference type="InParanoid" id="Q12256"/>
<dbReference type="OMA" id="LMPETHK"/>
<dbReference type="OrthoDB" id="3936150at2759"/>
<dbReference type="BioCyc" id="YEAST:G3O-33763-MONOMER"/>
<dbReference type="BioGRID-ORCS" id="854447">
    <property type="hits" value="0 hits in 10 CRISPR screens"/>
</dbReference>
<dbReference type="PRO" id="PR:Q12256"/>
<dbReference type="Proteomes" id="UP000002311">
    <property type="component" value="Chromosome XV"/>
</dbReference>
<dbReference type="RNAct" id="Q12256">
    <property type="molecule type" value="protein"/>
</dbReference>
<dbReference type="GO" id="GO:0071944">
    <property type="term" value="C:cell periphery"/>
    <property type="evidence" value="ECO:0007005"/>
    <property type="project" value="SGD"/>
</dbReference>
<dbReference type="GO" id="GO:0000329">
    <property type="term" value="C:fungal-type vacuole membrane"/>
    <property type="evidence" value="ECO:0000315"/>
    <property type="project" value="SGD"/>
</dbReference>
<dbReference type="GO" id="GO:0005886">
    <property type="term" value="C:plasma membrane"/>
    <property type="evidence" value="ECO:0000314"/>
    <property type="project" value="SGD"/>
</dbReference>
<dbReference type="GO" id="GO:0015297">
    <property type="term" value="F:antiporter activity"/>
    <property type="evidence" value="ECO:0007669"/>
    <property type="project" value="UniProtKB-KW"/>
</dbReference>
<dbReference type="GO" id="GO:0015606">
    <property type="term" value="F:spermidine transmembrane transporter activity"/>
    <property type="evidence" value="ECO:0000315"/>
    <property type="project" value="SGD"/>
</dbReference>
<dbReference type="GO" id="GO:0000297">
    <property type="term" value="F:spermine transmembrane transporter activity"/>
    <property type="evidence" value="ECO:0000315"/>
    <property type="project" value="SGD"/>
</dbReference>
<dbReference type="GO" id="GO:0015848">
    <property type="term" value="P:spermidine transport"/>
    <property type="evidence" value="ECO:0000315"/>
    <property type="project" value="SGD"/>
</dbReference>
<dbReference type="GO" id="GO:0000296">
    <property type="term" value="P:spermine transport"/>
    <property type="evidence" value="ECO:0000315"/>
    <property type="project" value="SGD"/>
</dbReference>
<dbReference type="GO" id="GO:0055085">
    <property type="term" value="P:transmembrane transport"/>
    <property type="evidence" value="ECO:0000318"/>
    <property type="project" value="GO_Central"/>
</dbReference>
<dbReference type="CDD" id="cd17323">
    <property type="entry name" value="MFS_Tpo1_MDR_like"/>
    <property type="match status" value="1"/>
</dbReference>
<dbReference type="FunFam" id="1.20.1250.20:FF:000088">
    <property type="entry name" value="MFS multidrug transporter, putative"/>
    <property type="match status" value="1"/>
</dbReference>
<dbReference type="Gene3D" id="1.20.1250.20">
    <property type="entry name" value="MFS general substrate transporter like domains"/>
    <property type="match status" value="1"/>
</dbReference>
<dbReference type="InterPro" id="IPR011701">
    <property type="entry name" value="MFS"/>
</dbReference>
<dbReference type="InterPro" id="IPR036259">
    <property type="entry name" value="MFS_trans_sf"/>
</dbReference>
<dbReference type="InterPro" id="IPR005829">
    <property type="entry name" value="Sugar_transporter_CS"/>
</dbReference>
<dbReference type="PANTHER" id="PTHR23502">
    <property type="entry name" value="MAJOR FACILITATOR SUPERFAMILY"/>
    <property type="match status" value="1"/>
</dbReference>
<dbReference type="PANTHER" id="PTHR23502:SF38">
    <property type="entry name" value="POLYAMINE TRANSPORTER 4"/>
    <property type="match status" value="1"/>
</dbReference>
<dbReference type="Pfam" id="PF07690">
    <property type="entry name" value="MFS_1"/>
    <property type="match status" value="1"/>
</dbReference>
<dbReference type="SUPFAM" id="SSF103473">
    <property type="entry name" value="MFS general substrate transporter"/>
    <property type="match status" value="1"/>
</dbReference>
<dbReference type="PROSITE" id="PS00216">
    <property type="entry name" value="SUGAR_TRANSPORT_1"/>
    <property type="match status" value="1"/>
</dbReference>
<gene>
    <name type="primary">TPO4</name>
    <name type="ordered locus">YOR273C</name>
    <name type="ORF">O5440</name>
</gene>
<comment type="function">
    <text evidence="3 4 8">Cell membrane polyamine/proton antiporter, involved in the detoxification of excess polyamines in the cytoplasm. Recognizes spermidine, spermine and the antimalarial drug quinidine, but not quinine, chloroquine and mefloquine.</text>
</comment>
<comment type="subcellular location">
    <subcellularLocation>
        <location evidence="4 5">Cell membrane</location>
        <topology evidence="4 5">Multi-pass membrane protein</topology>
    </subcellularLocation>
</comment>
<comment type="induction">
    <text evidence="7">By transcription factor HAA1 in response to acetaldehyde accumulation.</text>
</comment>
<comment type="miscellaneous">
    <text evidence="6">Present with 21400 molecules/cell in log phase SD medium.</text>
</comment>
<comment type="similarity">
    <text evidence="9">Belongs to the major facilitator superfamily. DHA1 family. Polyamines/proton antiporter (TC 2.A.1.2.16) subfamily.</text>
</comment>
<proteinExistence type="evidence at protein level"/>
<keyword id="KW-0050">Antiport</keyword>
<keyword id="KW-1003">Cell membrane</keyword>
<keyword id="KW-0472">Membrane</keyword>
<keyword id="KW-0597">Phosphoprotein</keyword>
<keyword id="KW-1185">Reference proteome</keyword>
<keyword id="KW-0812">Transmembrane</keyword>
<keyword id="KW-1133">Transmembrane helix</keyword>
<keyword id="KW-0813">Transport</keyword>
<protein>
    <recommendedName>
        <fullName>Polyamine transporter 4</fullName>
    </recommendedName>
</protein>
<feature type="chain" id="PRO_0000262732" description="Polyamine transporter 4">
    <location>
        <begin position="1"/>
        <end position="659"/>
    </location>
</feature>
<feature type="topological domain" description="Cytoplasmic" evidence="1">
    <location>
        <begin position="1"/>
        <end position="99"/>
    </location>
</feature>
<feature type="transmembrane region" description="Helical" evidence="1">
    <location>
        <begin position="100"/>
        <end position="120"/>
    </location>
</feature>
<feature type="topological domain" description="Extracellular" evidence="1">
    <location>
        <begin position="121"/>
        <end position="128"/>
    </location>
</feature>
<feature type="transmembrane region" description="Helical" evidence="1">
    <location>
        <begin position="129"/>
        <end position="149"/>
    </location>
</feature>
<feature type="topological domain" description="Cytoplasmic" evidence="1">
    <location>
        <begin position="150"/>
        <end position="157"/>
    </location>
</feature>
<feature type="transmembrane region" description="Helical" evidence="1">
    <location>
        <begin position="158"/>
        <end position="178"/>
    </location>
</feature>
<feature type="topological domain" description="Extracellular" evidence="1">
    <location>
        <begin position="179"/>
        <end position="187"/>
    </location>
</feature>
<feature type="transmembrane region" description="Helical" evidence="1">
    <location>
        <begin position="188"/>
        <end position="208"/>
    </location>
</feature>
<feature type="topological domain" description="Cytoplasmic" evidence="1">
    <location>
        <begin position="209"/>
        <end position="215"/>
    </location>
</feature>
<feature type="transmembrane region" description="Helical" evidence="1">
    <location>
        <begin position="216"/>
        <end position="236"/>
    </location>
</feature>
<feature type="topological domain" description="Extracellular" evidence="1">
    <location>
        <begin position="237"/>
        <end position="246"/>
    </location>
</feature>
<feature type="transmembrane region" description="Helical" evidence="1">
    <location>
        <begin position="247"/>
        <end position="267"/>
    </location>
</feature>
<feature type="topological domain" description="Cytoplasmic" evidence="1">
    <location>
        <begin position="268"/>
        <end position="316"/>
    </location>
</feature>
<feature type="transmembrane region" description="Helical" evidence="1">
    <location>
        <begin position="317"/>
        <end position="337"/>
    </location>
</feature>
<feature type="topological domain" description="Extracellular" evidence="1">
    <location>
        <begin position="338"/>
        <end position="355"/>
    </location>
</feature>
<feature type="transmembrane region" description="Helical" evidence="1">
    <location>
        <begin position="356"/>
        <end position="376"/>
    </location>
</feature>
<feature type="topological domain" description="Cytoplasmic" evidence="1">
    <location>
        <begin position="377"/>
        <end position="423"/>
    </location>
</feature>
<feature type="transmembrane region" description="Helical" evidence="1">
    <location>
        <begin position="424"/>
        <end position="444"/>
    </location>
</feature>
<feature type="topological domain" description="Extracellular" evidence="1">
    <location>
        <begin position="445"/>
        <end position="456"/>
    </location>
</feature>
<feature type="transmembrane region" description="Helical" evidence="1">
    <location>
        <begin position="457"/>
        <end position="477"/>
    </location>
</feature>
<feature type="topological domain" description="Cytoplasmic" evidence="1">
    <location>
        <begin position="478"/>
        <end position="486"/>
    </location>
</feature>
<feature type="transmembrane region" description="Helical" evidence="1">
    <location>
        <begin position="487"/>
        <end position="509"/>
    </location>
</feature>
<feature type="topological domain" description="Extracellular" evidence="1">
    <location>
        <begin position="510"/>
        <end position="518"/>
    </location>
</feature>
<feature type="transmembrane region" description="Helical" evidence="1">
    <location>
        <begin position="519"/>
        <end position="539"/>
    </location>
</feature>
<feature type="topological domain" description="Cytoplasmic" evidence="1">
    <location>
        <begin position="540"/>
        <end position="659"/>
    </location>
</feature>
<feature type="region of interest" description="Disordered" evidence="2">
    <location>
        <begin position="1"/>
        <end position="81"/>
    </location>
</feature>
<feature type="region of interest" description="Disordered" evidence="2">
    <location>
        <begin position="387"/>
        <end position="408"/>
    </location>
</feature>
<feature type="region of interest" description="Disordered" evidence="2">
    <location>
        <begin position="587"/>
        <end position="631"/>
    </location>
</feature>
<feature type="compositionally biased region" description="Polar residues" evidence="2">
    <location>
        <begin position="1"/>
        <end position="20"/>
    </location>
</feature>
<feature type="compositionally biased region" description="Polar residues" evidence="2">
    <location>
        <begin position="28"/>
        <end position="45"/>
    </location>
</feature>
<feature type="compositionally biased region" description="Basic and acidic residues" evidence="2">
    <location>
        <begin position="587"/>
        <end position="602"/>
    </location>
</feature>
<feature type="compositionally biased region" description="Polar residues" evidence="2">
    <location>
        <begin position="622"/>
        <end position="631"/>
    </location>
</feature>
<feature type="modified residue" description="Phosphothreonine" evidence="11">
    <location>
        <position position="589"/>
    </location>
</feature>
<feature type="modified residue" description="Phosphothreonine" evidence="10">
    <location>
        <position position="606"/>
    </location>
</feature>
<feature type="modified residue" description="Phosphothreonine" evidence="10">
    <location>
        <position position="608"/>
    </location>
</feature>
<feature type="modified residue" description="Phosphoserine" evidence="12">
    <location>
        <position position="633"/>
    </location>
</feature>
<feature type="modified residue" description="Phosphoserine" evidence="12">
    <location>
        <position position="646"/>
    </location>
</feature>
<sequence>MPSSLTKTESNSDPRTNIQQVPKALDKNVTNSGNLDSTSSSTGSITEDEKRSEPNADSNNMTGGEPIDPRDLDWDGPDDPDNPHNWSSLKKWYTTMTSAFLCLVVTMGSSLYVSSVPELVERYHVSQTLALAGLTFYLLGLSTVIGAPLSEVFGRKPVYLFSLPVSMLFTMGVGLSNGHMRIILPLRFLSGVFASPALSVGSGTILDIFDVDQVSVAMTYFVLSPFLGPVLSPIMAGFATEAKGWRWSEWIQLIAGGLILPFIALMPETHKGIILRKRAKKRNIALKKFSREAQKEFLKTTVTITILRPLKMLVVEPIVFVFSVYVAFIFAILFGFFEAYAVIYRGVYHMSMGISGLPFIGIGVGLWIGAFFYLYIDRKYLFPKPPAGTQPLTEKERTSKRTTPYRGARDAETGELLPVVPEKFLIACKFGSVALPIGLFWQAWTARSDVHWMAPVAAGVPFGFGLILIFFSVLMYFSTCYPPLTVASCLAANNLLRYVMSSVFPLFTIQMYTKMKIKWASTLFALVCVVMIPIPWVFEKWGSKLRHKSQFGYAAMEKEAETEGGIDDVNAVDGELNLTRMTTLRTMETDPSTREKPGERLSLRRTHTQPVPASFDREDGQHAQNRNEPISNSLYSAIKDNEDGYSYTEMATDASARMV</sequence>
<accession>Q12256</accession>
<accession>D6W2X3</accession>
<reference key="1">
    <citation type="journal article" date="1996" name="Yeast">
        <title>DNA sequence analysis of the VPH1-SNF2 region on chromosome XV of Saccharomyces cerevisiae.</title>
        <authorList>
            <person name="Cheret G."/>
            <person name="Bernardi A."/>
            <person name="Sor F.J."/>
        </authorList>
    </citation>
    <scope>NUCLEOTIDE SEQUENCE [GENOMIC DNA]</scope>
    <source>
        <strain>ATCC 204508 / S288c</strain>
    </source>
</reference>
<reference key="2">
    <citation type="journal article" date="1997" name="Nature">
        <title>The nucleotide sequence of Saccharomyces cerevisiae chromosome XV.</title>
        <authorList>
            <person name="Dujon B."/>
            <person name="Albermann K."/>
            <person name="Aldea M."/>
            <person name="Alexandraki D."/>
            <person name="Ansorge W."/>
            <person name="Arino J."/>
            <person name="Benes V."/>
            <person name="Bohn C."/>
            <person name="Bolotin-Fukuhara M."/>
            <person name="Bordonne R."/>
            <person name="Boyer J."/>
            <person name="Camasses A."/>
            <person name="Casamayor A."/>
            <person name="Casas C."/>
            <person name="Cheret G."/>
            <person name="Cziepluch C."/>
            <person name="Daignan-Fornier B."/>
            <person name="Dang V.-D."/>
            <person name="de Haan M."/>
            <person name="Delius H."/>
            <person name="Durand P."/>
            <person name="Fairhead C."/>
            <person name="Feldmann H."/>
            <person name="Gaillon L."/>
            <person name="Galisson F."/>
            <person name="Gamo F.-J."/>
            <person name="Gancedo C."/>
            <person name="Goffeau A."/>
            <person name="Goulding S.E."/>
            <person name="Grivell L.A."/>
            <person name="Habbig B."/>
            <person name="Hand N.J."/>
            <person name="Hani J."/>
            <person name="Hattenhorst U."/>
            <person name="Hebling U."/>
            <person name="Hernando Y."/>
            <person name="Herrero E."/>
            <person name="Heumann K."/>
            <person name="Hiesel R."/>
            <person name="Hilger F."/>
            <person name="Hofmann B."/>
            <person name="Hollenberg C.P."/>
            <person name="Hughes B."/>
            <person name="Jauniaux J.-C."/>
            <person name="Kalogeropoulos A."/>
            <person name="Katsoulou C."/>
            <person name="Kordes E."/>
            <person name="Lafuente M.J."/>
            <person name="Landt O."/>
            <person name="Louis E.J."/>
            <person name="Maarse A.C."/>
            <person name="Madania A."/>
            <person name="Mannhaupt G."/>
            <person name="Marck C."/>
            <person name="Martin R.P."/>
            <person name="Mewes H.-W."/>
            <person name="Michaux G."/>
            <person name="Paces V."/>
            <person name="Parle-McDermott A.G."/>
            <person name="Pearson B.M."/>
            <person name="Perrin A."/>
            <person name="Pettersson B."/>
            <person name="Poch O."/>
            <person name="Pohl T.M."/>
            <person name="Poirey R."/>
            <person name="Portetelle D."/>
            <person name="Pujol A."/>
            <person name="Purnelle B."/>
            <person name="Ramezani Rad M."/>
            <person name="Rechmann S."/>
            <person name="Schwager C."/>
            <person name="Schweizer M."/>
            <person name="Sor F."/>
            <person name="Sterky F."/>
            <person name="Tarassov I.A."/>
            <person name="Teodoru C."/>
            <person name="Tettelin H."/>
            <person name="Thierry A."/>
            <person name="Tobiasch E."/>
            <person name="Tzermia M."/>
            <person name="Uhlen M."/>
            <person name="Unseld M."/>
            <person name="Valens M."/>
            <person name="Vandenbol M."/>
            <person name="Vetter I."/>
            <person name="Vlcek C."/>
            <person name="Voet M."/>
            <person name="Volckaert G."/>
            <person name="Voss H."/>
            <person name="Wambutt R."/>
            <person name="Wedler H."/>
            <person name="Wiemann S."/>
            <person name="Winsor B."/>
            <person name="Wolfe K.H."/>
            <person name="Zollner A."/>
            <person name="Zumstein E."/>
            <person name="Kleine K."/>
        </authorList>
    </citation>
    <scope>NUCLEOTIDE SEQUENCE [LARGE SCALE GENOMIC DNA]</scope>
    <source>
        <strain>ATCC 204508 / S288c</strain>
    </source>
</reference>
<reference key="3">
    <citation type="journal article" date="2014" name="G3 (Bethesda)">
        <title>The reference genome sequence of Saccharomyces cerevisiae: Then and now.</title>
        <authorList>
            <person name="Engel S.R."/>
            <person name="Dietrich F.S."/>
            <person name="Fisk D.G."/>
            <person name="Binkley G."/>
            <person name="Balakrishnan R."/>
            <person name="Costanzo M.C."/>
            <person name="Dwight S.S."/>
            <person name="Hitz B.C."/>
            <person name="Karra K."/>
            <person name="Nash R.S."/>
            <person name="Weng S."/>
            <person name="Wong E.D."/>
            <person name="Lloyd P."/>
            <person name="Skrzypek M.S."/>
            <person name="Miyasato S.R."/>
            <person name="Simison M."/>
            <person name="Cherry J.M."/>
        </authorList>
    </citation>
    <scope>GENOME REANNOTATION</scope>
    <source>
        <strain>ATCC 204508 / S288c</strain>
    </source>
</reference>
<reference key="4">
    <citation type="journal article" date="1998" name="Antimicrob. Agents Chemother.">
        <title>Identification of Saccharomyces cerevisiae genes conferring resistance to quinoline ring-containing antimalarial drugs.</title>
        <authorList>
            <person name="Delling U."/>
            <person name="Raymond M."/>
            <person name="Schurr E."/>
        </authorList>
    </citation>
    <scope>FUNCTION</scope>
</reference>
<reference key="5">
    <citation type="journal article" date="2001" name="Biochem. J.">
        <title>Multiple polyamine transport systems on the vacuolar membrane in yeast.</title>
        <authorList>
            <person name="Tomitori H."/>
            <person name="Kashiwagi K."/>
            <person name="Asakawa T."/>
            <person name="Kakinuma Y."/>
            <person name="Michael A.J."/>
            <person name="Igarashi K."/>
        </authorList>
    </citation>
    <scope>FUNCTION</scope>
</reference>
<reference key="6">
    <citation type="journal article" date="2003" name="J. Biol. Chem.">
        <title>Localization and function of the yeast multidrug transporter Tpo1p.</title>
        <authorList>
            <person name="Albertsen M."/>
            <person name="Bellahn I."/>
            <person name="Kraemer R."/>
            <person name="Waffenschmidt S."/>
        </authorList>
    </citation>
    <scope>FUNCTION</scope>
    <scope>SUBCELLULAR LOCATION</scope>
</reference>
<reference key="7">
    <citation type="journal article" date="2003" name="Nature">
        <title>Global analysis of protein localization in budding yeast.</title>
        <authorList>
            <person name="Huh W.-K."/>
            <person name="Falvo J.V."/>
            <person name="Gerke L.C."/>
            <person name="Carroll A.S."/>
            <person name="Howson R.W."/>
            <person name="Weissman J.S."/>
            <person name="O'Shea E.K."/>
        </authorList>
    </citation>
    <scope>SUBCELLULAR LOCATION [LARGE SCALE ANALYSIS]</scope>
</reference>
<reference key="8">
    <citation type="journal article" date="2003" name="Nature">
        <title>Global analysis of protein expression in yeast.</title>
        <authorList>
            <person name="Ghaemmaghami S."/>
            <person name="Huh W.-K."/>
            <person name="Bower K."/>
            <person name="Howson R.W."/>
            <person name="Belle A."/>
            <person name="Dephoure N."/>
            <person name="O'Shea E.K."/>
            <person name="Weissman J.S."/>
        </authorList>
    </citation>
    <scope>LEVEL OF PROTEIN EXPRESSION [LARGE SCALE ANALYSIS]</scope>
</reference>
<reference key="9">
    <citation type="journal article" date="2004" name="Appl. Environ. Microbiol.">
        <title>Exposure of Saccharomyces cerevisiae to acetaldehyde induces sulfur amino acid metabolism and polyamine transporter genes, which depend on Met4p and Haa1p transcription factors, respectively.</title>
        <authorList>
            <person name="Aranda A."/>
            <person name="del Olmo M."/>
        </authorList>
    </citation>
    <scope>INDUCTION</scope>
</reference>
<reference key="10">
    <citation type="journal article" date="2006" name="Proc. Natl. Acad. Sci. U.S.A.">
        <title>A global topology map of the Saccharomyces cerevisiae membrane proteome.</title>
        <authorList>
            <person name="Kim H."/>
            <person name="Melen K."/>
            <person name="Oesterberg M."/>
            <person name="von Heijne G."/>
        </authorList>
    </citation>
    <scope>TOPOLOGY [LARGE SCALE ANALYSIS]</scope>
    <source>
        <strain>ATCC 208353 / W303-1A</strain>
    </source>
</reference>
<reference key="11">
    <citation type="journal article" date="2007" name="J. Proteome Res.">
        <title>Large-scale phosphorylation analysis of alpha-factor-arrested Saccharomyces cerevisiae.</title>
        <authorList>
            <person name="Li X."/>
            <person name="Gerber S.A."/>
            <person name="Rudner A.D."/>
            <person name="Beausoleil S.A."/>
            <person name="Haas W."/>
            <person name="Villen J."/>
            <person name="Elias J.E."/>
            <person name="Gygi S.P."/>
        </authorList>
    </citation>
    <scope>PHOSPHORYLATION [LARGE SCALE ANALYSIS] AT THR-606 AND THR-608</scope>
    <scope>IDENTIFICATION BY MASS SPECTROMETRY [LARGE SCALE ANALYSIS]</scope>
    <source>
        <strain>ADR376</strain>
    </source>
</reference>
<reference key="12">
    <citation type="journal article" date="2008" name="Mol. Cell. Proteomics">
        <title>A multidimensional chromatography technology for in-depth phosphoproteome analysis.</title>
        <authorList>
            <person name="Albuquerque C.P."/>
            <person name="Smolka M.B."/>
            <person name="Payne S.H."/>
            <person name="Bafna V."/>
            <person name="Eng J."/>
            <person name="Zhou H."/>
        </authorList>
    </citation>
    <scope>PHOSPHORYLATION [LARGE SCALE ANALYSIS] AT THR-589</scope>
    <scope>IDENTIFICATION BY MASS SPECTROMETRY [LARGE SCALE ANALYSIS]</scope>
</reference>
<reference key="13">
    <citation type="journal article" date="2009" name="Science">
        <title>Global analysis of Cdk1 substrate phosphorylation sites provides insights into evolution.</title>
        <authorList>
            <person name="Holt L.J."/>
            <person name="Tuch B.B."/>
            <person name="Villen J."/>
            <person name="Johnson A.D."/>
            <person name="Gygi S.P."/>
            <person name="Morgan D.O."/>
        </authorList>
    </citation>
    <scope>PHOSPHORYLATION [LARGE SCALE ANALYSIS] AT SER-633 AND SER-646</scope>
    <scope>IDENTIFICATION BY MASS SPECTROMETRY [LARGE SCALE ANALYSIS]</scope>
</reference>